<keyword id="KW-0249">Electron transport</keyword>
<keyword id="KW-0472">Membrane</keyword>
<keyword id="KW-0496">Mitochondrion</keyword>
<keyword id="KW-0999">Mitochondrion inner membrane</keyword>
<keyword id="KW-0520">NAD</keyword>
<keyword id="KW-1185">Reference proteome</keyword>
<keyword id="KW-0679">Respiratory chain</keyword>
<keyword id="KW-1278">Translocase</keyword>
<keyword id="KW-0812">Transmembrane</keyword>
<keyword id="KW-1133">Transmembrane helix</keyword>
<keyword id="KW-0813">Transport</keyword>
<keyword id="KW-0830">Ubiquinone</keyword>
<name>NU2M_CANLF</name>
<organism>
    <name type="scientific">Canis lupus familiaris</name>
    <name type="common">Dog</name>
    <name type="synonym">Canis familiaris</name>
    <dbReference type="NCBI Taxonomy" id="9615"/>
    <lineage>
        <taxon>Eukaryota</taxon>
        <taxon>Metazoa</taxon>
        <taxon>Chordata</taxon>
        <taxon>Craniata</taxon>
        <taxon>Vertebrata</taxon>
        <taxon>Euteleostomi</taxon>
        <taxon>Mammalia</taxon>
        <taxon>Eutheria</taxon>
        <taxon>Laurasiatheria</taxon>
        <taxon>Carnivora</taxon>
        <taxon>Caniformia</taxon>
        <taxon>Canidae</taxon>
        <taxon>Canis</taxon>
    </lineage>
</organism>
<dbReference type="EC" id="7.1.1.2" evidence="1"/>
<dbReference type="EMBL" id="U96639">
    <property type="protein sequence ID" value="AAD04764.2"/>
    <property type="molecule type" value="Genomic_DNA"/>
</dbReference>
<dbReference type="EMBL" id="AY729880">
    <property type="protein sequence ID" value="AAU12150.1"/>
    <property type="molecule type" value="Genomic_DNA"/>
</dbReference>
<dbReference type="PIR" id="T11494">
    <property type="entry name" value="T11494"/>
</dbReference>
<dbReference type="RefSeq" id="NP_008472.4">
    <property type="nucleotide sequence ID" value="NC_002008.4"/>
</dbReference>
<dbReference type="SMR" id="Q9ZZ65"/>
<dbReference type="FunCoup" id="Q9ZZ65">
    <property type="interactions" value="9"/>
</dbReference>
<dbReference type="STRING" id="9615.ENSCAFP00000030310"/>
<dbReference type="PaxDb" id="9612-ENSCAFP00000030310"/>
<dbReference type="GeneID" id="804477"/>
<dbReference type="KEGG" id="cfa:804477"/>
<dbReference type="CTD" id="4536"/>
<dbReference type="eggNOG" id="KOG4668">
    <property type="taxonomic scope" value="Eukaryota"/>
</dbReference>
<dbReference type="HOGENOM" id="CLU_007100_1_3_1"/>
<dbReference type="InParanoid" id="Q9ZZ65"/>
<dbReference type="OMA" id="HFWVPEV"/>
<dbReference type="TreeFam" id="TF343996"/>
<dbReference type="Proteomes" id="UP000002254">
    <property type="component" value="Mitochondrion"/>
</dbReference>
<dbReference type="Proteomes" id="UP000694429">
    <property type="component" value="Unplaced"/>
</dbReference>
<dbReference type="Proteomes" id="UP000694542">
    <property type="component" value="Unassembled WGS sequence"/>
</dbReference>
<dbReference type="Proteomes" id="UP000805418">
    <property type="component" value="Mitochondrion MT"/>
</dbReference>
<dbReference type="Bgee" id="ENSCAFG00000022717">
    <property type="expression patterns" value="Expressed in spinal cord and 47 other cell types or tissues"/>
</dbReference>
<dbReference type="GO" id="GO:0005743">
    <property type="term" value="C:mitochondrial inner membrane"/>
    <property type="evidence" value="ECO:0000250"/>
    <property type="project" value="UniProtKB"/>
</dbReference>
<dbReference type="GO" id="GO:0045271">
    <property type="term" value="C:respiratory chain complex I"/>
    <property type="evidence" value="ECO:0000318"/>
    <property type="project" value="GO_Central"/>
</dbReference>
<dbReference type="GO" id="GO:0008137">
    <property type="term" value="F:NADH dehydrogenase (ubiquinone) activity"/>
    <property type="evidence" value="ECO:0000250"/>
    <property type="project" value="UniProtKB"/>
</dbReference>
<dbReference type="GO" id="GO:0006120">
    <property type="term" value="P:mitochondrial electron transport, NADH to ubiquinone"/>
    <property type="evidence" value="ECO:0000250"/>
    <property type="project" value="UniProtKB"/>
</dbReference>
<dbReference type="GO" id="GO:0032981">
    <property type="term" value="P:mitochondrial respiratory chain complex I assembly"/>
    <property type="evidence" value="ECO:0000250"/>
    <property type="project" value="UniProtKB"/>
</dbReference>
<dbReference type="InterPro" id="IPR050175">
    <property type="entry name" value="Complex_I_Subunit_2"/>
</dbReference>
<dbReference type="InterPro" id="IPR010933">
    <property type="entry name" value="NADH_DH_su2_C"/>
</dbReference>
<dbReference type="InterPro" id="IPR003917">
    <property type="entry name" value="NADH_UbQ_OxRdtase_chain2"/>
</dbReference>
<dbReference type="InterPro" id="IPR001750">
    <property type="entry name" value="ND/Mrp_TM"/>
</dbReference>
<dbReference type="PANTHER" id="PTHR46552">
    <property type="entry name" value="NADH-UBIQUINONE OXIDOREDUCTASE CHAIN 2"/>
    <property type="match status" value="1"/>
</dbReference>
<dbReference type="PANTHER" id="PTHR46552:SF1">
    <property type="entry name" value="NADH-UBIQUINONE OXIDOREDUCTASE CHAIN 2"/>
    <property type="match status" value="1"/>
</dbReference>
<dbReference type="Pfam" id="PF06444">
    <property type="entry name" value="NADH_dehy_S2_C"/>
    <property type="match status" value="1"/>
</dbReference>
<dbReference type="Pfam" id="PF00361">
    <property type="entry name" value="Proton_antipo_M"/>
    <property type="match status" value="1"/>
</dbReference>
<dbReference type="PRINTS" id="PR01436">
    <property type="entry name" value="NADHDHGNASE2"/>
</dbReference>
<geneLocation type="mitochondrion"/>
<sequence length="347" mass="39102">MKPPILIIIMATIMTGTMIVMLSSHWLLIWIGFEMNMLAIIPILMKKYNPRAMEASTKYFLTQATASMLLMMGVTINLLYSGQWVISKISNPIASIMMTTALTMKLGLSPFHFWVPEVTQGITLMSGMILLTWQKIAPMSILYQISPSINTNLLMLMALTSVLVGGWGGLNQTQLRKIMAYSSIAHMGWMAAIITYNPTMMVLNLTLYILMTLSTFMLFMLNSSTTTLSLSHMWNKFPLITSMILILMLSLGGLPPLSGFIPKWMIIQELTKNNMIIIPTLMAITALLNLYFYLRLTYSTALTMFPSTNNMKMKWQFEYTKKATLLPPLIITSTMLLPLTPMLSVLD</sequence>
<accession>Q9ZZ65</accession>
<reference key="1">
    <citation type="journal article" date="1998" name="Mol. Phylogenet. Evol.">
        <title>The complete nucleotide sequence of the domestic dog (Canis familiaris) mitochondrial genome.</title>
        <authorList>
            <person name="Kim K.S."/>
            <person name="Lee S.E."/>
            <person name="Jeong H.W."/>
            <person name="Ha J.H."/>
        </authorList>
    </citation>
    <scope>NUCLEOTIDE SEQUENCE [GENOMIC DNA]</scope>
    <source>
        <strain evidence="5">Boxer</strain>
    </source>
</reference>
<reference key="2">
    <citation type="submission" date="2000-04" db="EMBL/GenBank/DDBJ databases">
        <authorList>
            <person name="Kim K.S."/>
            <person name="Lee S.E."/>
            <person name="Jeong H.W."/>
            <person name="Jeong S.Y."/>
            <person name="Sohn H.S."/>
            <person name="Ha J.H."/>
        </authorList>
    </citation>
    <scope>SEQUENCE REVISION TO 2</scope>
</reference>
<reference key="3">
    <citation type="submission" date="2004-08" db="EMBL/GenBank/DDBJ databases">
        <title>The complete mitochondrial DNA sequence of the Beagle dog (Canis familiaris).</title>
        <authorList>
            <person name="Zhu S."/>
            <person name="Xu Q."/>
            <person name="Chang H."/>
        </authorList>
    </citation>
    <scope>NUCLEOTIDE SEQUENCE [GENOMIC DNA]</scope>
    <source>
        <strain>Beagle</strain>
    </source>
</reference>
<proteinExistence type="inferred from homology"/>
<comment type="function">
    <text evidence="1">Core subunit of the mitochondrial membrane respiratory chain NADH dehydrogenase (Complex I) which catalyzes electron transfer from NADH through the respiratory chain, using ubiquinone as an electron acceptor. Essential for the catalytic activity and assembly of complex I.</text>
</comment>
<comment type="catalytic activity">
    <reaction evidence="1">
        <text>a ubiquinone + NADH + 5 H(+)(in) = a ubiquinol + NAD(+) + 4 H(+)(out)</text>
        <dbReference type="Rhea" id="RHEA:29091"/>
        <dbReference type="Rhea" id="RHEA-COMP:9565"/>
        <dbReference type="Rhea" id="RHEA-COMP:9566"/>
        <dbReference type="ChEBI" id="CHEBI:15378"/>
        <dbReference type="ChEBI" id="CHEBI:16389"/>
        <dbReference type="ChEBI" id="CHEBI:17976"/>
        <dbReference type="ChEBI" id="CHEBI:57540"/>
        <dbReference type="ChEBI" id="CHEBI:57945"/>
        <dbReference type="EC" id="7.1.1.2"/>
    </reaction>
</comment>
<comment type="subunit">
    <text evidence="1 2">Core subunit of respiratory chain NADH dehydrogenase (Complex I) which is composed of 45 different subunits. Interacts with TMEM242 (By similarity).</text>
</comment>
<comment type="subcellular location">
    <subcellularLocation>
        <location evidence="2">Mitochondrion inner membrane</location>
        <topology evidence="3">Multi-pass membrane protein</topology>
    </subcellularLocation>
</comment>
<comment type="similarity">
    <text evidence="4">Belongs to the complex I subunit 2 family.</text>
</comment>
<feature type="chain" id="PRO_0000117565" description="NADH-ubiquinone oxidoreductase chain 2">
    <location>
        <begin position="1"/>
        <end position="347"/>
    </location>
</feature>
<feature type="transmembrane region" description="Helical" evidence="3">
    <location>
        <begin position="3"/>
        <end position="23"/>
    </location>
</feature>
<feature type="transmembrane region" description="Helical" evidence="3">
    <location>
        <begin position="25"/>
        <end position="45"/>
    </location>
</feature>
<feature type="transmembrane region" description="Helical" evidence="3">
    <location>
        <begin position="66"/>
        <end position="86"/>
    </location>
</feature>
<feature type="transmembrane region" description="Helical" evidence="3">
    <location>
        <begin position="111"/>
        <end position="131"/>
    </location>
</feature>
<feature type="transmembrane region" description="Helical" evidence="3">
    <location>
        <begin position="149"/>
        <end position="169"/>
    </location>
</feature>
<feature type="transmembrane region" description="Helical" evidence="3">
    <location>
        <begin position="178"/>
        <end position="198"/>
    </location>
</feature>
<feature type="transmembrane region" description="Helical" evidence="3">
    <location>
        <begin position="201"/>
        <end position="221"/>
    </location>
</feature>
<feature type="transmembrane region" description="Helical" evidence="3">
    <location>
        <begin position="237"/>
        <end position="257"/>
    </location>
</feature>
<feature type="transmembrane region" description="Helical" evidence="3">
    <location>
        <begin position="274"/>
        <end position="294"/>
    </location>
</feature>
<feature type="transmembrane region" description="Helical" evidence="3">
    <location>
        <begin position="325"/>
        <end position="345"/>
    </location>
</feature>
<protein>
    <recommendedName>
        <fullName evidence="1">NADH-ubiquinone oxidoreductase chain 2</fullName>
        <ecNumber evidence="1">7.1.1.2</ecNumber>
    </recommendedName>
    <alternativeName>
        <fullName>NADH dehydrogenase subunit 2</fullName>
    </alternativeName>
</protein>
<evidence type="ECO:0000250" key="1">
    <source>
        <dbReference type="UniProtKB" id="P03891"/>
    </source>
</evidence>
<evidence type="ECO:0000250" key="2">
    <source>
        <dbReference type="UniProtKB" id="P03892"/>
    </source>
</evidence>
<evidence type="ECO:0000255" key="3"/>
<evidence type="ECO:0000305" key="4"/>
<evidence type="ECO:0000312" key="5">
    <source>
        <dbReference type="Proteomes" id="UP000002254"/>
    </source>
</evidence>
<gene>
    <name evidence="1" type="primary">MT-ND2</name>
    <name type="synonym">MTND2</name>
    <name type="synonym">NADH2</name>
    <name type="synonym">ND2</name>
</gene>